<accession>B7MLH7</accession>
<keyword id="KW-0963">Cytoplasm</keyword>
<keyword id="KW-0227">DNA damage</keyword>
<keyword id="KW-0234">DNA repair</keyword>
<keyword id="KW-0255">Endonuclease</keyword>
<keyword id="KW-0378">Hydrolase</keyword>
<keyword id="KW-0540">Nuclease</keyword>
<keyword id="KW-1185">Reference proteome</keyword>
<gene>
    <name evidence="1" type="primary">mutH</name>
    <name type="ordered locus">ECS88_3126</name>
</gene>
<comment type="function">
    <text evidence="1">Sequence-specific endonuclease that cleaves unmethylated GATC sequences. It is involved in DNA mismatch repair.</text>
</comment>
<comment type="subcellular location">
    <subcellularLocation>
        <location evidence="1">Cytoplasm</location>
    </subcellularLocation>
</comment>
<comment type="similarity">
    <text evidence="1">Belongs to the MutH family.</text>
</comment>
<proteinExistence type="inferred from homology"/>
<name>MUTH_ECO45</name>
<dbReference type="EMBL" id="CU928161">
    <property type="protein sequence ID" value="CAR04366.1"/>
    <property type="molecule type" value="Genomic_DNA"/>
</dbReference>
<dbReference type="RefSeq" id="WP_000082183.1">
    <property type="nucleotide sequence ID" value="NC_011742.1"/>
</dbReference>
<dbReference type="SMR" id="B7MLH7"/>
<dbReference type="KEGG" id="ecz:ECS88_3126"/>
<dbReference type="HOGENOM" id="CLU_086669_0_0_6"/>
<dbReference type="Proteomes" id="UP000000747">
    <property type="component" value="Chromosome"/>
</dbReference>
<dbReference type="GO" id="GO:0005737">
    <property type="term" value="C:cytoplasm"/>
    <property type="evidence" value="ECO:0007669"/>
    <property type="project" value="UniProtKB-SubCell"/>
</dbReference>
<dbReference type="GO" id="GO:0003677">
    <property type="term" value="F:DNA binding"/>
    <property type="evidence" value="ECO:0007669"/>
    <property type="project" value="InterPro"/>
</dbReference>
<dbReference type="GO" id="GO:0004519">
    <property type="term" value="F:endonuclease activity"/>
    <property type="evidence" value="ECO:0007669"/>
    <property type="project" value="UniProtKB-UniRule"/>
</dbReference>
<dbReference type="GO" id="GO:0006304">
    <property type="term" value="P:DNA modification"/>
    <property type="evidence" value="ECO:0007669"/>
    <property type="project" value="InterPro"/>
</dbReference>
<dbReference type="GO" id="GO:0006298">
    <property type="term" value="P:mismatch repair"/>
    <property type="evidence" value="ECO:0007669"/>
    <property type="project" value="UniProtKB-UniRule"/>
</dbReference>
<dbReference type="CDD" id="cd00583">
    <property type="entry name" value="MutH-like"/>
    <property type="match status" value="1"/>
</dbReference>
<dbReference type="FunFam" id="3.40.600.10:FF:000001">
    <property type="entry name" value="DNA mismatch repair protein MutH"/>
    <property type="match status" value="1"/>
</dbReference>
<dbReference type="Gene3D" id="3.40.600.10">
    <property type="entry name" value="DNA mismatch repair MutH/Restriction endonuclease, type II"/>
    <property type="match status" value="1"/>
</dbReference>
<dbReference type="HAMAP" id="MF_00759">
    <property type="entry name" value="MutH"/>
    <property type="match status" value="1"/>
</dbReference>
<dbReference type="InterPro" id="IPR004230">
    <property type="entry name" value="DNA_mismatch_repair_MutH"/>
</dbReference>
<dbReference type="InterPro" id="IPR011337">
    <property type="entry name" value="DNA_rep_MutH/RE_typeII_Sau3AI"/>
</dbReference>
<dbReference type="InterPro" id="IPR037057">
    <property type="entry name" value="DNA_rep_MutH/T2_RE_sf"/>
</dbReference>
<dbReference type="InterPro" id="IPR011335">
    <property type="entry name" value="Restrct_endonuc-II-like"/>
</dbReference>
<dbReference type="NCBIfam" id="TIGR02248">
    <property type="entry name" value="mutH_TIGR"/>
    <property type="match status" value="1"/>
</dbReference>
<dbReference type="NCBIfam" id="NF003458">
    <property type="entry name" value="PRK05070.1"/>
    <property type="match status" value="1"/>
</dbReference>
<dbReference type="Pfam" id="PF02976">
    <property type="entry name" value="MutH"/>
    <property type="match status" value="1"/>
</dbReference>
<dbReference type="SMART" id="SM00927">
    <property type="entry name" value="MutH"/>
    <property type="match status" value="1"/>
</dbReference>
<dbReference type="SUPFAM" id="SSF52980">
    <property type="entry name" value="Restriction endonuclease-like"/>
    <property type="match status" value="1"/>
</dbReference>
<sequence>MSQPRPLLSPPETEEQLLAQAQQLSGYTLGELAALAGLVTPENLKRDKGWIGVLLEIWLGASAGSKPEQDFAALGVELKTIPVDSLGRPLETTFVCVAPLTGNSGVTWETSHVRHKLKRVLWIPVEGERSIPLAKRRVGSPLLWSPNEEEDRQLREDWEELMDMIVLGQIERITARHGEYLQIRPKAANAKALTEAIGARGERILTLPRGFYLKKNFTSALLARHFLIQ</sequence>
<organism>
    <name type="scientific">Escherichia coli O45:K1 (strain S88 / ExPEC)</name>
    <dbReference type="NCBI Taxonomy" id="585035"/>
    <lineage>
        <taxon>Bacteria</taxon>
        <taxon>Pseudomonadati</taxon>
        <taxon>Pseudomonadota</taxon>
        <taxon>Gammaproteobacteria</taxon>
        <taxon>Enterobacterales</taxon>
        <taxon>Enterobacteriaceae</taxon>
        <taxon>Escherichia</taxon>
    </lineage>
</organism>
<reference key="1">
    <citation type="journal article" date="2009" name="PLoS Genet.">
        <title>Organised genome dynamics in the Escherichia coli species results in highly diverse adaptive paths.</title>
        <authorList>
            <person name="Touchon M."/>
            <person name="Hoede C."/>
            <person name="Tenaillon O."/>
            <person name="Barbe V."/>
            <person name="Baeriswyl S."/>
            <person name="Bidet P."/>
            <person name="Bingen E."/>
            <person name="Bonacorsi S."/>
            <person name="Bouchier C."/>
            <person name="Bouvet O."/>
            <person name="Calteau A."/>
            <person name="Chiapello H."/>
            <person name="Clermont O."/>
            <person name="Cruveiller S."/>
            <person name="Danchin A."/>
            <person name="Diard M."/>
            <person name="Dossat C."/>
            <person name="Karoui M.E."/>
            <person name="Frapy E."/>
            <person name="Garry L."/>
            <person name="Ghigo J.M."/>
            <person name="Gilles A.M."/>
            <person name="Johnson J."/>
            <person name="Le Bouguenec C."/>
            <person name="Lescat M."/>
            <person name="Mangenot S."/>
            <person name="Martinez-Jehanne V."/>
            <person name="Matic I."/>
            <person name="Nassif X."/>
            <person name="Oztas S."/>
            <person name="Petit M.A."/>
            <person name="Pichon C."/>
            <person name="Rouy Z."/>
            <person name="Ruf C.S."/>
            <person name="Schneider D."/>
            <person name="Tourret J."/>
            <person name="Vacherie B."/>
            <person name="Vallenet D."/>
            <person name="Medigue C."/>
            <person name="Rocha E.P.C."/>
            <person name="Denamur E."/>
        </authorList>
    </citation>
    <scope>NUCLEOTIDE SEQUENCE [LARGE SCALE GENOMIC DNA]</scope>
    <source>
        <strain>S88 / ExPEC</strain>
    </source>
</reference>
<evidence type="ECO:0000255" key="1">
    <source>
        <dbReference type="HAMAP-Rule" id="MF_00759"/>
    </source>
</evidence>
<protein>
    <recommendedName>
        <fullName evidence="1">DNA mismatch repair protein MutH</fullName>
    </recommendedName>
    <alternativeName>
        <fullName evidence="1">Methyl-directed mismatch repair protein</fullName>
    </alternativeName>
</protein>
<feature type="chain" id="PRO_1000133460" description="DNA mismatch repair protein MutH">
    <location>
        <begin position="1"/>
        <end position="229"/>
    </location>
</feature>